<protein>
    <recommendedName>
        <fullName evidence="1">Large ribosomal subunit protein uL16c</fullName>
    </recommendedName>
    <alternativeName>
        <fullName evidence="3">50S ribosomal protein L16, chloroplastic</fullName>
    </alternativeName>
</protein>
<evidence type="ECO:0000255" key="1">
    <source>
        <dbReference type="HAMAP-Rule" id="MF_01342"/>
    </source>
</evidence>
<evidence type="ECO:0000256" key="2">
    <source>
        <dbReference type="SAM" id="MobiDB-lite"/>
    </source>
</evidence>
<evidence type="ECO:0000305" key="3"/>
<organism>
    <name type="scientific">Solanum bulbocastanum</name>
    <name type="common">Wild potato</name>
    <dbReference type="NCBI Taxonomy" id="147425"/>
    <lineage>
        <taxon>Eukaryota</taxon>
        <taxon>Viridiplantae</taxon>
        <taxon>Streptophyta</taxon>
        <taxon>Embryophyta</taxon>
        <taxon>Tracheophyta</taxon>
        <taxon>Spermatophyta</taxon>
        <taxon>Magnoliopsida</taxon>
        <taxon>eudicotyledons</taxon>
        <taxon>Gunneridae</taxon>
        <taxon>Pentapetalae</taxon>
        <taxon>asterids</taxon>
        <taxon>lamiids</taxon>
        <taxon>Solanales</taxon>
        <taxon>Solanaceae</taxon>
        <taxon>Solanoideae</taxon>
        <taxon>Solaneae</taxon>
        <taxon>Solanum</taxon>
    </lineage>
</organism>
<reference key="1">
    <citation type="journal article" date="2006" name="Theor. Appl. Genet.">
        <title>Complete chloroplast genome sequences of Solanum bulbocastanum, Solanum lycopersicum and comparative analyses with other Solanaceae genomes.</title>
        <authorList>
            <person name="Daniell H."/>
            <person name="Lee S.-B."/>
            <person name="Grevich J."/>
            <person name="Saski C."/>
            <person name="Quesada-Vargas T."/>
            <person name="Guda C."/>
            <person name="Tomkins J."/>
            <person name="Jansen R.K."/>
        </authorList>
    </citation>
    <scope>NUCLEOTIDE SEQUENCE [LARGE SCALE GENOMIC DNA]</scope>
    <source>
        <strain>cv. PT29</strain>
    </source>
</reference>
<sequence length="134" mass="15183">MLSPKRTRFRKQHRGRMKGISSRGNRISFGKYALQALEPAWITSRQIEAGRRAMTRNARRGGKIWVRIFPDKPVTLRPAETRMGSGKGSPEYWVAVVKPGRILYEMGGVTENIARRAISLAASKMPIRTQFIIS</sequence>
<accession>Q2MIF0</accession>
<name>RK16_SOLBU</name>
<comment type="subunit">
    <text evidence="1">Part of the 50S ribosomal subunit.</text>
</comment>
<comment type="subcellular location">
    <subcellularLocation>
        <location>Plastid</location>
        <location>Chloroplast</location>
    </subcellularLocation>
</comment>
<comment type="similarity">
    <text evidence="1">Belongs to the universal ribosomal protein uL16 family.</text>
</comment>
<gene>
    <name evidence="1" type="primary">rpl16</name>
</gene>
<feature type="chain" id="PRO_0000251700" description="Large ribosomal subunit protein uL16c">
    <location>
        <begin position="1"/>
        <end position="134"/>
    </location>
</feature>
<feature type="region of interest" description="Disordered" evidence="2">
    <location>
        <begin position="1"/>
        <end position="21"/>
    </location>
</feature>
<feature type="compositionally biased region" description="Basic residues" evidence="2">
    <location>
        <begin position="1"/>
        <end position="17"/>
    </location>
</feature>
<proteinExistence type="inferred from homology"/>
<dbReference type="EMBL" id="DQ347958">
    <property type="protein sequence ID" value="ABC56250.1"/>
    <property type="molecule type" value="Genomic_DNA"/>
</dbReference>
<dbReference type="RefSeq" id="YP_538887.1">
    <property type="nucleotide sequence ID" value="NC_007943.1"/>
</dbReference>
<dbReference type="SMR" id="Q2MIF0"/>
<dbReference type="GeneID" id="3989420"/>
<dbReference type="GO" id="GO:0009507">
    <property type="term" value="C:chloroplast"/>
    <property type="evidence" value="ECO:0007669"/>
    <property type="project" value="UniProtKB-SubCell"/>
</dbReference>
<dbReference type="GO" id="GO:0005762">
    <property type="term" value="C:mitochondrial large ribosomal subunit"/>
    <property type="evidence" value="ECO:0007669"/>
    <property type="project" value="TreeGrafter"/>
</dbReference>
<dbReference type="GO" id="GO:0019843">
    <property type="term" value="F:rRNA binding"/>
    <property type="evidence" value="ECO:0007669"/>
    <property type="project" value="InterPro"/>
</dbReference>
<dbReference type="GO" id="GO:0003735">
    <property type="term" value="F:structural constituent of ribosome"/>
    <property type="evidence" value="ECO:0007669"/>
    <property type="project" value="InterPro"/>
</dbReference>
<dbReference type="GO" id="GO:0032543">
    <property type="term" value="P:mitochondrial translation"/>
    <property type="evidence" value="ECO:0007669"/>
    <property type="project" value="TreeGrafter"/>
</dbReference>
<dbReference type="CDD" id="cd01433">
    <property type="entry name" value="Ribosomal_L16_L10e"/>
    <property type="match status" value="1"/>
</dbReference>
<dbReference type="FunFam" id="3.90.1170.10:FF:000001">
    <property type="entry name" value="50S ribosomal protein L16"/>
    <property type="match status" value="1"/>
</dbReference>
<dbReference type="Gene3D" id="3.90.1170.10">
    <property type="entry name" value="Ribosomal protein L10e/L16"/>
    <property type="match status" value="1"/>
</dbReference>
<dbReference type="HAMAP" id="MF_01342">
    <property type="entry name" value="Ribosomal_uL16"/>
    <property type="match status" value="1"/>
</dbReference>
<dbReference type="InterPro" id="IPR047873">
    <property type="entry name" value="Ribosomal_uL16"/>
</dbReference>
<dbReference type="InterPro" id="IPR000114">
    <property type="entry name" value="Ribosomal_uL16_bact-type"/>
</dbReference>
<dbReference type="InterPro" id="IPR020798">
    <property type="entry name" value="Ribosomal_uL16_CS"/>
</dbReference>
<dbReference type="InterPro" id="IPR016180">
    <property type="entry name" value="Ribosomal_uL16_dom"/>
</dbReference>
<dbReference type="InterPro" id="IPR036920">
    <property type="entry name" value="Ribosomal_uL16_sf"/>
</dbReference>
<dbReference type="NCBIfam" id="TIGR01164">
    <property type="entry name" value="rplP_bact"/>
    <property type="match status" value="1"/>
</dbReference>
<dbReference type="PANTHER" id="PTHR12220">
    <property type="entry name" value="50S/60S RIBOSOMAL PROTEIN L16"/>
    <property type="match status" value="1"/>
</dbReference>
<dbReference type="PANTHER" id="PTHR12220:SF13">
    <property type="entry name" value="LARGE RIBOSOMAL SUBUNIT PROTEIN UL16M"/>
    <property type="match status" value="1"/>
</dbReference>
<dbReference type="Pfam" id="PF00252">
    <property type="entry name" value="Ribosomal_L16"/>
    <property type="match status" value="1"/>
</dbReference>
<dbReference type="PRINTS" id="PR00060">
    <property type="entry name" value="RIBOSOMALL16"/>
</dbReference>
<dbReference type="SUPFAM" id="SSF54686">
    <property type="entry name" value="Ribosomal protein L16p/L10e"/>
    <property type="match status" value="1"/>
</dbReference>
<dbReference type="PROSITE" id="PS00586">
    <property type="entry name" value="RIBOSOMAL_L16_1"/>
    <property type="match status" value="1"/>
</dbReference>
<dbReference type="PROSITE" id="PS00701">
    <property type="entry name" value="RIBOSOMAL_L16_2"/>
    <property type="match status" value="1"/>
</dbReference>
<geneLocation type="chloroplast"/>
<keyword id="KW-0150">Chloroplast</keyword>
<keyword id="KW-0934">Plastid</keyword>
<keyword id="KW-0687">Ribonucleoprotein</keyword>
<keyword id="KW-0689">Ribosomal protein</keyword>